<organism>
    <name type="scientific">Epifagus virginiana</name>
    <name type="common">Beechdrops</name>
    <name type="synonym">Orobanche virginiana</name>
    <dbReference type="NCBI Taxonomy" id="4177"/>
    <lineage>
        <taxon>Eukaryota</taxon>
        <taxon>Viridiplantae</taxon>
        <taxon>Streptophyta</taxon>
        <taxon>Embryophyta</taxon>
        <taxon>Tracheophyta</taxon>
        <taxon>Spermatophyta</taxon>
        <taxon>Magnoliopsida</taxon>
        <taxon>eudicotyledons</taxon>
        <taxon>Gunneridae</taxon>
        <taxon>Pentapetalae</taxon>
        <taxon>asterids</taxon>
        <taxon>lamiids</taxon>
        <taxon>Lamiales</taxon>
        <taxon>Orobanchaceae</taxon>
        <taxon>Orobancheae</taxon>
        <taxon>Epifagus</taxon>
    </lineage>
</organism>
<sequence>MSRRGTAEEKTAKPDPIYWNRLVNMLVNRILKHGKKSLAYQIIYRALKKIQQKTEKNPLYVLRQAIRGVTPDIAVKARRVGGSTHQVPIEIGSTQGKALAVRWLLVASKKRPGQNMAFKLSSELVDAAKGSGDAIRKKEETHKMAEASRAFAHLR</sequence>
<gene>
    <name type="primary">rps7-A</name>
</gene>
<gene>
    <name type="primary">rps7-B</name>
</gene>
<name>RR7_EPIVI</name>
<protein>
    <recommendedName>
        <fullName evidence="2">Small ribosomal subunit protein uS7cz/uS7cy</fullName>
    </recommendedName>
    <alternativeName>
        <fullName>30S ribosomal protein S7, plastid</fullName>
    </alternativeName>
</protein>
<accession>P30057</accession>
<comment type="function">
    <text evidence="1">One of the primary rRNA binding proteins, it binds directly to 16S rRNA where it nucleates assembly of the head domain of the 30S subunit.</text>
</comment>
<comment type="subunit">
    <text>Part of the 30S ribosomal subunit.</text>
</comment>
<comment type="subcellular location">
    <subcellularLocation>
        <location>Plastid</location>
    </subcellularLocation>
</comment>
<comment type="similarity">
    <text evidence="3">Belongs to the universal ribosomal protein uS7 family.</text>
</comment>
<reference key="1">
    <citation type="journal article" date="1992" name="Proc. Natl. Acad. Sci. U.S.A.">
        <title>Function and evolution of a minimal plastid genome from a nonphotosynthetic parasitic plant.</title>
        <authorList>
            <person name="Wolfe K.H."/>
            <person name="Morden C.W."/>
            <person name="Palmer J.D."/>
        </authorList>
    </citation>
    <scope>NUCLEOTIDE SEQUENCE [LARGE SCALE GENOMIC DNA]</scope>
</reference>
<reference key="2">
    <citation type="journal article" date="1992" name="J. Mol. Evol.">
        <title>Rapid evolution of the plastid translational apparatus in a nonphotosynthetic plant: loss or accelerated sequence evolution of tRNA and ribosomal protein genes.</title>
        <authorList>
            <person name="Wolfe K.H."/>
            <person name="Morden C.W."/>
            <person name="Ems S.C."/>
            <person name="Palmer J.D."/>
        </authorList>
    </citation>
    <scope>NUCLEOTIDE SEQUENCE [GENOMIC DNA]</scope>
</reference>
<proteinExistence type="inferred from homology"/>
<geneLocation type="non-photosynthetic plastid"/>
<feature type="chain" id="PRO_0000124453" description="Small ribosomal subunit protein uS7cz/uS7cy">
    <location>
        <begin position="1"/>
        <end position="155"/>
    </location>
</feature>
<evidence type="ECO:0000250" key="1"/>
<evidence type="ECO:0000255" key="2">
    <source>
        <dbReference type="HAMAP-Rule" id="MF_00480"/>
    </source>
</evidence>
<evidence type="ECO:0000305" key="3"/>
<dbReference type="EMBL" id="M81884">
    <property type="protein sequence ID" value="AAA65868.1"/>
    <property type="molecule type" value="Genomic_DNA"/>
</dbReference>
<dbReference type="EMBL" id="M81884">
    <property type="protein sequence ID" value="AAA65872.1"/>
    <property type="molecule type" value="Genomic_DNA"/>
</dbReference>
<dbReference type="PIR" id="S78399">
    <property type="entry name" value="S78399"/>
</dbReference>
<dbReference type="SMR" id="P30057"/>
<dbReference type="GO" id="GO:0009536">
    <property type="term" value="C:plastid"/>
    <property type="evidence" value="ECO:0007669"/>
    <property type="project" value="UniProtKB-SubCell"/>
</dbReference>
<dbReference type="GO" id="GO:0015935">
    <property type="term" value="C:small ribosomal subunit"/>
    <property type="evidence" value="ECO:0007669"/>
    <property type="project" value="InterPro"/>
</dbReference>
<dbReference type="GO" id="GO:0019843">
    <property type="term" value="F:rRNA binding"/>
    <property type="evidence" value="ECO:0007669"/>
    <property type="project" value="UniProtKB-KW"/>
</dbReference>
<dbReference type="GO" id="GO:0003735">
    <property type="term" value="F:structural constituent of ribosome"/>
    <property type="evidence" value="ECO:0007669"/>
    <property type="project" value="InterPro"/>
</dbReference>
<dbReference type="GO" id="GO:0006412">
    <property type="term" value="P:translation"/>
    <property type="evidence" value="ECO:0007669"/>
    <property type="project" value="InterPro"/>
</dbReference>
<dbReference type="CDD" id="cd14871">
    <property type="entry name" value="uS7_Chloroplast"/>
    <property type="match status" value="1"/>
</dbReference>
<dbReference type="FunFam" id="1.10.455.10:FF:000001">
    <property type="entry name" value="30S ribosomal protein S7"/>
    <property type="match status" value="1"/>
</dbReference>
<dbReference type="Gene3D" id="1.10.455.10">
    <property type="entry name" value="Ribosomal protein S7 domain"/>
    <property type="match status" value="1"/>
</dbReference>
<dbReference type="HAMAP" id="MF_00480_B">
    <property type="entry name" value="Ribosomal_uS7_B"/>
    <property type="match status" value="1"/>
</dbReference>
<dbReference type="InterPro" id="IPR000235">
    <property type="entry name" value="Ribosomal_uS7"/>
</dbReference>
<dbReference type="InterPro" id="IPR005717">
    <property type="entry name" value="Ribosomal_uS7_bac/org-type"/>
</dbReference>
<dbReference type="InterPro" id="IPR020606">
    <property type="entry name" value="Ribosomal_uS7_CS"/>
</dbReference>
<dbReference type="InterPro" id="IPR023798">
    <property type="entry name" value="Ribosomal_uS7_dom"/>
</dbReference>
<dbReference type="InterPro" id="IPR036823">
    <property type="entry name" value="Ribosomal_uS7_dom_sf"/>
</dbReference>
<dbReference type="NCBIfam" id="TIGR01029">
    <property type="entry name" value="rpsG_bact"/>
    <property type="match status" value="1"/>
</dbReference>
<dbReference type="PANTHER" id="PTHR11205">
    <property type="entry name" value="RIBOSOMAL PROTEIN S7"/>
    <property type="match status" value="1"/>
</dbReference>
<dbReference type="Pfam" id="PF00177">
    <property type="entry name" value="Ribosomal_S7"/>
    <property type="match status" value="1"/>
</dbReference>
<dbReference type="PIRSF" id="PIRSF002122">
    <property type="entry name" value="RPS7p_RPS7a_RPS5e_RPS7o"/>
    <property type="match status" value="1"/>
</dbReference>
<dbReference type="SUPFAM" id="SSF47973">
    <property type="entry name" value="Ribosomal protein S7"/>
    <property type="match status" value="1"/>
</dbReference>
<dbReference type="PROSITE" id="PS00052">
    <property type="entry name" value="RIBOSOMAL_S7"/>
    <property type="match status" value="1"/>
</dbReference>
<keyword id="KW-0934">Plastid</keyword>
<keyword id="KW-0687">Ribonucleoprotein</keyword>
<keyword id="KW-0689">Ribosomal protein</keyword>
<keyword id="KW-0694">RNA-binding</keyword>
<keyword id="KW-0699">rRNA-binding</keyword>